<feature type="chain" id="PRO_0000096264" description="Methyl-CpG-binding domain protein 4">
    <location>
        <begin position="1"/>
        <end position="580"/>
    </location>
</feature>
<feature type="domain" description="MBD" evidence="2">
    <location>
        <begin position="76"/>
        <end position="148"/>
    </location>
</feature>
<feature type="region of interest" description="Disordered" evidence="3">
    <location>
        <begin position="1"/>
        <end position="36"/>
    </location>
</feature>
<feature type="active site" evidence="1">
    <location>
        <position position="560"/>
    </location>
</feature>
<feature type="modified residue" description="Phosphoserine" evidence="21">
    <location>
        <position position="318"/>
    </location>
</feature>
<feature type="modified residue" description="Phosphoserine" evidence="21">
    <location>
        <position position="428"/>
    </location>
</feature>
<feature type="splice variant" id="VSP_054845" description="In isoform 4." evidence="15">
    <original>RKSVPCGWERVVKQRLFGKTAGRFDVYFISPQGLKFRSKSSLANYLHKNGETSLKPEDFDFTVLSKRGIKSRYKDCSMAALTSHLQNQSNNSNWNLRTRSKCKKDVFMPPSSSSELQESRGLSNFTSTHLLLKEDEGVDDVNFRKVRKPKGKVTILKGIPIKKTKKGCRKSCSGFVQSDSKRESVCNKADAESEPVAQKSQLDRTVCISDAGACGETLSVTSEENSLVKKKERSLSSGSNFCSEQKTSGIINKFCSAKDSEHNEKYEDTFLESEEIGTKVEVVERKEHLHTDILKRGSEMDNNCSPTRKDFTGEKIFQE</original>
    <variation>Q</variation>
    <location>
        <begin position="83"/>
        <end position="401"/>
    </location>
</feature>
<feature type="splice variant" id="VSP_010816" description="In isoform 2." evidence="14 17">
    <location>
        <begin position="395"/>
        <end position="400"/>
    </location>
</feature>
<feature type="splice variant" id="VSP_010817" description="In isoform 3." evidence="16">
    <original>KY</original>
    <variation>AP</variation>
    <location>
        <begin position="539"/>
        <end position="540"/>
    </location>
</feature>
<feature type="splice variant" id="VSP_010818" description="In isoform 3." evidence="16">
    <location>
        <begin position="541"/>
        <end position="580"/>
    </location>
</feature>
<feature type="splice variant" id="VSP_054846" description="In isoform 5." evidence="13">
    <original>HPEDHKLNKYHDWLWENHEKLSLS</original>
    <variation>RLTPIHNSAHLVSEAK</variation>
    <location>
        <begin position="557"/>
        <end position="580"/>
    </location>
</feature>
<feature type="sequence variant" id="VAR_029306" description="In dbSNP:rs2307296.">
    <original>C</original>
    <variation>R</variation>
    <location>
        <position position="61"/>
    </location>
</feature>
<feature type="sequence variant" id="VAR_087522" description="In TPDS2; no MBD4 protein detected by immunohistochemical analysis in patient tumor tissue." evidence="9">
    <location>
        <begin position="73"/>
        <end position="580"/>
    </location>
</feature>
<feature type="sequence variant" id="VAR_087523" description="In UVM1." evidence="10">
    <location>
        <begin position="181"/>
        <end position="580"/>
    </location>
</feature>
<feature type="sequence variant" id="VAR_087524" description="In TPDS2." evidence="7">
    <location>
        <begin position="255"/>
        <end position="580"/>
    </location>
</feature>
<feature type="sequence variant" id="VAR_019357" description="In dbSNP:rs10342." evidence="12">
    <original>A</original>
    <variation>S</variation>
    <location>
        <position position="273"/>
    </location>
</feature>
<feature type="sequence variant" id="VAR_019514" description="In dbSNP:rs10342.">
    <original>A</original>
    <variation>T</variation>
    <location>
        <position position="273"/>
    </location>
</feature>
<feature type="sequence variant" id="VAR_019358" description="In dbSNP:rs2307289." evidence="12">
    <original>S</original>
    <variation>P</variation>
    <location>
        <position position="342"/>
    </location>
</feature>
<feature type="sequence variant" id="VAR_019359" description="In dbSNP:rs140693." evidence="12">
    <original>E</original>
    <variation>K</variation>
    <location>
        <position position="346"/>
    </location>
</feature>
<feature type="sequence variant" id="VAR_019515" description="In dbSNP:rs2307298.">
    <original>I</original>
    <variation>T</variation>
    <location>
        <position position="358"/>
    </location>
</feature>
<feature type="sequence variant" id="VAR_087525" description="In TPDS2." evidence="7">
    <location>
        <begin position="431"/>
        <end position="580"/>
    </location>
</feature>
<feature type="sequence variant" id="VAR_087526" description="In UVM1; loss of DNA N-glycosylase activity; dbSNP:rs1380952147." evidence="10">
    <original>R</original>
    <variation>W</variation>
    <location>
        <position position="468"/>
    </location>
</feature>
<feature type="sequence variant" id="VAR_087527" description="In TPDS2." evidence="7">
    <location>
        <begin position="546"/>
        <end position="580"/>
    </location>
</feature>
<feature type="sequence variant" id="VAR_087528" description="In TPDS2 and UVM1." evidence="7 8 11">
    <location>
        <begin position="563"/>
        <end position="580"/>
    </location>
</feature>
<feature type="sequence variant" id="VAR_087529" description="In TPDS2; loss of DNA N-glycosylase activity; dbSNP:rs775848563." evidence="7">
    <location>
        <position position="567"/>
    </location>
</feature>
<feature type="sequence variant" id="VAR_019360" description="In dbSNP:rs2307293." evidence="12">
    <original>D</original>
    <variation>H</variation>
    <location>
        <position position="568"/>
    </location>
</feature>
<feature type="sequence variant" id="VAR_087530" description="In UVM1; loss of DNA N-glycosylase activity." evidence="10">
    <location>
        <begin position="569"/>
        <end position="580"/>
    </location>
</feature>
<feature type="mutagenesis site" description="Loss of DNA N-glycosylase activity." evidence="7">
    <original>D</original>
    <variation>A</variation>
    <location>
        <position position="560"/>
    </location>
</feature>
<feature type="sequence conflict" description="In Ref. 6; BAG64144." evidence="18" ref="6">
    <original>E</original>
    <variation>G</variation>
    <location>
        <position position="51"/>
    </location>
</feature>
<feature type="sequence conflict" description="In Ref. 6; BAG64144." evidence="18" ref="6">
    <original>G</original>
    <variation>R</variation>
    <location>
        <position position="359"/>
    </location>
</feature>
<feature type="sequence conflict" description="In Ref. 6; BAG64144." evidence="18" ref="6">
    <original>S</original>
    <variation>L</variation>
    <location>
        <position position="387"/>
    </location>
</feature>
<feature type="strand" evidence="22">
    <location>
        <begin position="91"/>
        <end position="96"/>
    </location>
</feature>
<feature type="turn" evidence="22">
    <location>
        <begin position="101"/>
        <end position="104"/>
    </location>
</feature>
<feature type="strand" evidence="22">
    <location>
        <begin position="106"/>
        <end position="111"/>
    </location>
</feature>
<feature type="helix" evidence="22">
    <location>
        <begin position="121"/>
        <end position="130"/>
    </location>
</feature>
<feature type="helix" evidence="22">
    <location>
        <begin position="138"/>
        <end position="140"/>
    </location>
</feature>
<feature type="helix" evidence="23">
    <location>
        <begin position="449"/>
        <end position="452"/>
    </location>
</feature>
<feature type="helix" evidence="23">
    <location>
        <begin position="456"/>
        <end position="465"/>
    </location>
</feature>
<feature type="turn" evidence="23">
    <location>
        <begin position="466"/>
        <end position="468"/>
    </location>
</feature>
<feature type="helix" evidence="23">
    <location>
        <begin position="471"/>
        <end position="484"/>
    </location>
</feature>
<feature type="helix" evidence="23">
    <location>
        <begin position="488"/>
        <end position="491"/>
    </location>
</feature>
<feature type="helix" evidence="23">
    <location>
        <begin position="496"/>
        <end position="503"/>
    </location>
</feature>
<feature type="helix" evidence="23">
    <location>
        <begin position="504"/>
        <end position="506"/>
    </location>
</feature>
<feature type="helix" evidence="23">
    <location>
        <begin position="509"/>
        <end position="525"/>
    </location>
</feature>
<feature type="helix" evidence="23">
    <location>
        <begin position="531"/>
        <end position="533"/>
    </location>
</feature>
<feature type="helix" evidence="23">
    <location>
        <begin position="539"/>
        <end position="548"/>
    </location>
</feature>
<feature type="helix" evidence="23">
    <location>
        <begin position="553"/>
        <end position="555"/>
    </location>
</feature>
<feature type="helix" evidence="23">
    <location>
        <begin position="561"/>
        <end position="577"/>
    </location>
</feature>
<accession>O95243</accession>
<accession>B4DZN2</accession>
<accession>D3DNC3</accession>
<accession>D3DNC4</accession>
<accession>E9PEE4</accession>
<accession>Q2MD36</accession>
<accession>Q7Z4T3</accession>
<accession>Q96F09</accession>
<proteinExistence type="evidence at protein level"/>
<organism>
    <name type="scientific">Homo sapiens</name>
    <name type="common">Human</name>
    <dbReference type="NCBI Taxonomy" id="9606"/>
    <lineage>
        <taxon>Eukaryota</taxon>
        <taxon>Metazoa</taxon>
        <taxon>Chordata</taxon>
        <taxon>Craniata</taxon>
        <taxon>Vertebrata</taxon>
        <taxon>Euteleostomi</taxon>
        <taxon>Mammalia</taxon>
        <taxon>Eutheria</taxon>
        <taxon>Euarchontoglires</taxon>
        <taxon>Primates</taxon>
        <taxon>Haplorrhini</taxon>
        <taxon>Catarrhini</taxon>
        <taxon>Hominidae</taxon>
        <taxon>Homo</taxon>
    </lineage>
</organism>
<name>MBD4_HUMAN</name>
<protein>
    <recommendedName>
        <fullName>Methyl-CpG-binding domain protein 4</fullName>
        <ecNumber>3.2.2.-</ecNumber>
    </recommendedName>
    <alternativeName>
        <fullName>Methyl-CpG-binding endonuclease 1</fullName>
    </alternativeName>
    <alternativeName>
        <fullName>Methyl-CpG-binding protein MBD4</fullName>
    </alternativeName>
    <alternativeName>
        <fullName>Mismatch-specific DNA N-glycosylase</fullName>
    </alternativeName>
</protein>
<dbReference type="EC" id="3.2.2.-"/>
<dbReference type="EMBL" id="AF072250">
    <property type="protein sequence ID" value="AAC68879.1"/>
    <property type="molecule type" value="mRNA"/>
</dbReference>
<dbReference type="EMBL" id="AF120999">
    <property type="protein sequence ID" value="AAD50374.1"/>
    <property type="molecule type" value="Genomic_DNA"/>
</dbReference>
<dbReference type="EMBL" id="AF120997">
    <property type="protein sequence ID" value="AAD50374.1"/>
    <property type="status" value="JOINED"/>
    <property type="molecule type" value="Genomic_DNA"/>
</dbReference>
<dbReference type="EMBL" id="AF120998">
    <property type="protein sequence ID" value="AAD50374.1"/>
    <property type="status" value="JOINED"/>
    <property type="molecule type" value="Genomic_DNA"/>
</dbReference>
<dbReference type="EMBL" id="AF114784">
    <property type="protein sequence ID" value="AAD22195.1"/>
    <property type="molecule type" value="mRNA"/>
</dbReference>
<dbReference type="EMBL" id="AM180876">
    <property type="protein sequence ID" value="CAJ55826.1"/>
    <property type="molecule type" value="mRNA"/>
</dbReference>
<dbReference type="EMBL" id="AF532602">
    <property type="protein sequence ID" value="AAP97338.1"/>
    <property type="molecule type" value="mRNA"/>
</dbReference>
<dbReference type="EMBL" id="AK303013">
    <property type="protein sequence ID" value="BAG64144.1"/>
    <property type="molecule type" value="mRNA"/>
</dbReference>
<dbReference type="EMBL" id="CR450305">
    <property type="protein sequence ID" value="CAG29301.1"/>
    <property type="molecule type" value="mRNA"/>
</dbReference>
<dbReference type="EMBL" id="AF494057">
    <property type="protein sequence ID" value="AAM00008.1"/>
    <property type="molecule type" value="Genomic_DNA"/>
</dbReference>
<dbReference type="EMBL" id="AL449212">
    <property type="status" value="NOT_ANNOTATED_CDS"/>
    <property type="molecule type" value="Genomic_DNA"/>
</dbReference>
<dbReference type="EMBL" id="CH471052">
    <property type="protein sequence ID" value="EAW79251.1"/>
    <property type="molecule type" value="Genomic_DNA"/>
</dbReference>
<dbReference type="EMBL" id="CH471052">
    <property type="protein sequence ID" value="EAW79253.1"/>
    <property type="molecule type" value="Genomic_DNA"/>
</dbReference>
<dbReference type="EMBL" id="CH471052">
    <property type="protein sequence ID" value="EAW79254.1"/>
    <property type="molecule type" value="Genomic_DNA"/>
</dbReference>
<dbReference type="EMBL" id="CH471052">
    <property type="protein sequence ID" value="EAW79255.1"/>
    <property type="molecule type" value="Genomic_DNA"/>
</dbReference>
<dbReference type="EMBL" id="BC011752">
    <property type="protein sequence ID" value="AAH11752.1"/>
    <property type="molecule type" value="mRNA"/>
</dbReference>
<dbReference type="CCDS" id="CCDS3058.1">
    <molecule id="O95243-1"/>
</dbReference>
<dbReference type="CCDS" id="CCDS63766.1">
    <molecule id="O95243-5"/>
</dbReference>
<dbReference type="CCDS" id="CCDS63767.1">
    <molecule id="O95243-3"/>
</dbReference>
<dbReference type="CCDS" id="CCDS63768.1">
    <molecule id="O95243-2"/>
</dbReference>
<dbReference type="CCDS" id="CCDS63769.1">
    <molecule id="O95243-6"/>
</dbReference>
<dbReference type="RefSeq" id="NP_001263199.1">
    <molecule id="O95243-2"/>
    <property type="nucleotide sequence ID" value="NM_001276270.2"/>
</dbReference>
<dbReference type="RefSeq" id="NP_001263200.1">
    <molecule id="O95243-5"/>
    <property type="nucleotide sequence ID" value="NM_001276271.2"/>
</dbReference>
<dbReference type="RefSeq" id="NP_001263201.1">
    <molecule id="O95243-3"/>
    <property type="nucleotide sequence ID" value="NM_001276272.2"/>
</dbReference>
<dbReference type="RefSeq" id="NP_001263202.1">
    <molecule id="O95243-6"/>
    <property type="nucleotide sequence ID" value="NM_001276273.2"/>
</dbReference>
<dbReference type="RefSeq" id="NP_003916.1">
    <molecule id="O95243-1"/>
    <property type="nucleotide sequence ID" value="NM_003925.3"/>
</dbReference>
<dbReference type="PDB" id="2MOE">
    <property type="method" value="NMR"/>
    <property type="chains" value="A=80-148"/>
</dbReference>
<dbReference type="PDB" id="3IHO">
    <property type="method" value="X-ray"/>
    <property type="resolution" value="2.70 A"/>
    <property type="chains" value="A=437-574"/>
</dbReference>
<dbReference type="PDB" id="4DK9">
    <property type="method" value="X-ray"/>
    <property type="resolution" value="2.76 A"/>
    <property type="chains" value="A=426-580"/>
</dbReference>
<dbReference type="PDB" id="4E9E">
    <property type="method" value="X-ray"/>
    <property type="resolution" value="1.90 A"/>
    <property type="chains" value="A=427-580"/>
</dbReference>
<dbReference type="PDB" id="4E9F">
    <property type="method" value="X-ray"/>
    <property type="resolution" value="1.79 A"/>
    <property type="chains" value="A=427-580"/>
</dbReference>
<dbReference type="PDB" id="4E9G">
    <property type="method" value="X-ray"/>
    <property type="resolution" value="2.35 A"/>
    <property type="chains" value="A=427-580"/>
</dbReference>
<dbReference type="PDB" id="4E9H">
    <property type="method" value="X-ray"/>
    <property type="resolution" value="3.00 A"/>
    <property type="chains" value="A=427-580"/>
</dbReference>
<dbReference type="PDB" id="4EA4">
    <property type="method" value="X-ray"/>
    <property type="resolution" value="2.00 A"/>
    <property type="chains" value="A=427-574"/>
</dbReference>
<dbReference type="PDB" id="4EA5">
    <property type="method" value="X-ray"/>
    <property type="resolution" value="2.14 A"/>
    <property type="chains" value="A=427-580"/>
</dbReference>
<dbReference type="PDB" id="4LG7">
    <property type="method" value="X-ray"/>
    <property type="resolution" value="2.50 A"/>
    <property type="chains" value="A=83-149"/>
</dbReference>
<dbReference type="PDB" id="4OFA">
    <property type="method" value="X-ray"/>
    <property type="resolution" value="1.55 A"/>
    <property type="chains" value="A=426-580"/>
</dbReference>
<dbReference type="PDB" id="4OFE">
    <property type="method" value="X-ray"/>
    <property type="resolution" value="2.15 A"/>
    <property type="chains" value="A=426-580"/>
</dbReference>
<dbReference type="PDB" id="4OFH">
    <property type="method" value="X-ray"/>
    <property type="resolution" value="2.22 A"/>
    <property type="chains" value="A=426-580"/>
</dbReference>
<dbReference type="PDB" id="5CHZ">
    <property type="method" value="X-ray"/>
    <property type="resolution" value="1.83 A"/>
    <property type="chains" value="A=426-580"/>
</dbReference>
<dbReference type="PDB" id="6VJW">
    <property type="method" value="X-ray"/>
    <property type="resolution" value="2.02 A"/>
    <property type="chains" value="A=438-575"/>
</dbReference>
<dbReference type="PDB" id="7KZ0">
    <property type="method" value="X-ray"/>
    <property type="resolution" value="1.57 A"/>
    <property type="chains" value="A=426-580"/>
</dbReference>
<dbReference type="PDB" id="7KZ1">
    <property type="method" value="X-ray"/>
    <property type="resolution" value="1.62 A"/>
    <property type="chains" value="A=426-580"/>
</dbReference>
<dbReference type="PDB" id="7KZG">
    <property type="method" value="X-ray"/>
    <property type="resolution" value="1.68 A"/>
    <property type="chains" value="A=426-580"/>
</dbReference>
<dbReference type="PDBsum" id="2MOE"/>
<dbReference type="PDBsum" id="3IHO"/>
<dbReference type="PDBsum" id="4DK9"/>
<dbReference type="PDBsum" id="4E9E"/>
<dbReference type="PDBsum" id="4E9F"/>
<dbReference type="PDBsum" id="4E9G"/>
<dbReference type="PDBsum" id="4E9H"/>
<dbReference type="PDBsum" id="4EA4"/>
<dbReference type="PDBsum" id="4EA5"/>
<dbReference type="PDBsum" id="4LG7"/>
<dbReference type="PDBsum" id="4OFA"/>
<dbReference type="PDBsum" id="4OFE"/>
<dbReference type="PDBsum" id="4OFH"/>
<dbReference type="PDBsum" id="5CHZ"/>
<dbReference type="PDBsum" id="6VJW"/>
<dbReference type="PDBsum" id="7KZ0"/>
<dbReference type="PDBsum" id="7KZ1"/>
<dbReference type="PDBsum" id="7KZG"/>
<dbReference type="BMRB" id="O95243"/>
<dbReference type="SMR" id="O95243"/>
<dbReference type="BioGRID" id="114444">
    <property type="interactions" value="90"/>
</dbReference>
<dbReference type="FunCoup" id="O95243">
    <property type="interactions" value="2782"/>
</dbReference>
<dbReference type="IntAct" id="O95243">
    <property type="interactions" value="53"/>
</dbReference>
<dbReference type="MINT" id="O95243"/>
<dbReference type="STRING" id="9606.ENSP00000249910"/>
<dbReference type="GlyGen" id="O95243">
    <property type="glycosylation" value="2 sites, 1 N-linked glycan (1 site), 1 O-linked glycan (1 site)"/>
</dbReference>
<dbReference type="iPTMnet" id="O95243"/>
<dbReference type="MetOSite" id="O95243"/>
<dbReference type="PhosphoSitePlus" id="O95243"/>
<dbReference type="BioMuta" id="MBD4"/>
<dbReference type="jPOST" id="O95243"/>
<dbReference type="MassIVE" id="O95243"/>
<dbReference type="PaxDb" id="9606-ENSP00000249910"/>
<dbReference type="PeptideAtlas" id="O95243"/>
<dbReference type="ProteomicsDB" id="19871"/>
<dbReference type="ProteomicsDB" id="50740">
    <molecule id="O95243-1"/>
</dbReference>
<dbReference type="ProteomicsDB" id="50741">
    <molecule id="O95243-2"/>
</dbReference>
<dbReference type="ProteomicsDB" id="50742">
    <molecule id="O95243-3"/>
</dbReference>
<dbReference type="ProteomicsDB" id="61389"/>
<dbReference type="Pumba" id="O95243"/>
<dbReference type="TopDownProteomics" id="O95243-3">
    <molecule id="O95243-3"/>
</dbReference>
<dbReference type="ABCD" id="O95243">
    <property type="antibodies" value="2 sequenced antibodies"/>
</dbReference>
<dbReference type="Antibodypedia" id="1087">
    <property type="antibodies" value="229 antibodies from 33 providers"/>
</dbReference>
<dbReference type="DNASU" id="8930"/>
<dbReference type="Ensembl" id="ENST00000249910.5">
    <molecule id="O95243-1"/>
    <property type="protein sequence ID" value="ENSP00000249910.1"/>
    <property type="gene ID" value="ENSG00000129071.10"/>
</dbReference>
<dbReference type="Ensembl" id="ENST00000393278.6">
    <molecule id="O95243-6"/>
    <property type="protein sequence ID" value="ENSP00000376959.2"/>
    <property type="gene ID" value="ENSG00000129071.10"/>
</dbReference>
<dbReference type="Ensembl" id="ENST00000429544.7">
    <molecule id="O95243-2"/>
    <property type="protein sequence ID" value="ENSP00000394080.2"/>
    <property type="gene ID" value="ENSG00000129071.10"/>
</dbReference>
<dbReference type="Ensembl" id="ENST00000503197.5">
    <molecule id="O95243-3"/>
    <property type="protein sequence ID" value="ENSP00000424873.1"/>
    <property type="gene ID" value="ENSG00000129071.10"/>
</dbReference>
<dbReference type="Ensembl" id="ENST00000507208.1">
    <molecule id="O95243-5"/>
    <property type="protein sequence ID" value="ENSP00000422327.1"/>
    <property type="gene ID" value="ENSG00000129071.10"/>
</dbReference>
<dbReference type="GeneID" id="8930"/>
<dbReference type="KEGG" id="hsa:8930"/>
<dbReference type="MANE-Select" id="ENST00000429544.7">
    <molecule id="O95243-2"/>
    <property type="protein sequence ID" value="ENSP00000394080.2"/>
    <property type="RefSeq nucleotide sequence ID" value="NM_001276270.2"/>
    <property type="RefSeq protein sequence ID" value="NP_001263199.1"/>
</dbReference>
<dbReference type="UCSC" id="uc003emh.3">
    <molecule id="O95243-1"/>
    <property type="organism name" value="human"/>
</dbReference>
<dbReference type="AGR" id="HGNC:6919"/>
<dbReference type="CTD" id="8930"/>
<dbReference type="DisGeNET" id="8930"/>
<dbReference type="GeneCards" id="MBD4"/>
<dbReference type="HGNC" id="HGNC:6919">
    <property type="gene designation" value="MBD4"/>
</dbReference>
<dbReference type="HPA" id="ENSG00000129071">
    <property type="expression patterns" value="Low tissue specificity"/>
</dbReference>
<dbReference type="MalaCards" id="MBD4"/>
<dbReference type="MIM" id="603574">
    <property type="type" value="gene"/>
</dbReference>
<dbReference type="MIM" id="606660">
    <property type="type" value="phenotype"/>
</dbReference>
<dbReference type="MIM" id="619975">
    <property type="type" value="phenotype"/>
</dbReference>
<dbReference type="neXtProt" id="NX_O95243"/>
<dbReference type="OpenTargets" id="ENSG00000129071"/>
<dbReference type="Orphanet" id="661526">
    <property type="disease" value="MBD4-related tumor predisposition syndrome"/>
</dbReference>
<dbReference type="PharmGKB" id="PA30663"/>
<dbReference type="VEuPathDB" id="HostDB:ENSG00000129071"/>
<dbReference type="eggNOG" id="KOG4161">
    <property type="taxonomic scope" value="Eukaryota"/>
</dbReference>
<dbReference type="GeneTree" id="ENSGT00530000063687"/>
<dbReference type="HOGENOM" id="CLU_034167_0_0_1"/>
<dbReference type="InParanoid" id="O95243"/>
<dbReference type="OMA" id="MTECHKS"/>
<dbReference type="OrthoDB" id="10265068at2759"/>
<dbReference type="PAN-GO" id="O95243">
    <property type="GO annotations" value="2 GO annotations based on evolutionary models"/>
</dbReference>
<dbReference type="PhylomeDB" id="O95243"/>
<dbReference type="TreeFam" id="TF329176"/>
<dbReference type="PathwayCommons" id="O95243"/>
<dbReference type="Reactome" id="R-HSA-110328">
    <property type="pathway name" value="Recognition and association of DNA glycosylase with site containing an affected pyrimidine"/>
</dbReference>
<dbReference type="Reactome" id="R-HSA-110329">
    <property type="pathway name" value="Cleavage of the damaged pyrimidine"/>
</dbReference>
<dbReference type="Reactome" id="R-HSA-110357">
    <property type="pathway name" value="Displacement of DNA glycosylase by APEX1"/>
</dbReference>
<dbReference type="SignaLink" id="O95243"/>
<dbReference type="SIGNOR" id="O95243"/>
<dbReference type="BioGRID-ORCS" id="8930">
    <property type="hits" value="7 hits in 1180 CRISPR screens"/>
</dbReference>
<dbReference type="ChiTaRS" id="MBD4">
    <property type="organism name" value="human"/>
</dbReference>
<dbReference type="EvolutionaryTrace" id="O95243"/>
<dbReference type="GeneWiki" id="MBD4"/>
<dbReference type="GenomeRNAi" id="8930"/>
<dbReference type="Pharos" id="O95243">
    <property type="development level" value="Tbio"/>
</dbReference>
<dbReference type="PRO" id="PR:O95243"/>
<dbReference type="Proteomes" id="UP000005640">
    <property type="component" value="Chromosome 3"/>
</dbReference>
<dbReference type="RNAct" id="O95243">
    <property type="molecule type" value="protein"/>
</dbReference>
<dbReference type="Bgee" id="ENSG00000129071">
    <property type="expression patterns" value="Expressed in secondary oocyte and 215 other cell types or tissues"/>
</dbReference>
<dbReference type="ExpressionAtlas" id="O95243">
    <property type="expression patterns" value="baseline and differential"/>
</dbReference>
<dbReference type="GO" id="GO:0016607">
    <property type="term" value="C:nuclear speck"/>
    <property type="evidence" value="ECO:0000314"/>
    <property type="project" value="HPA"/>
</dbReference>
<dbReference type="GO" id="GO:0005654">
    <property type="term" value="C:nucleoplasm"/>
    <property type="evidence" value="ECO:0000304"/>
    <property type="project" value="Reactome"/>
</dbReference>
<dbReference type="GO" id="GO:0005634">
    <property type="term" value="C:nucleus"/>
    <property type="evidence" value="ECO:0000318"/>
    <property type="project" value="GO_Central"/>
</dbReference>
<dbReference type="GO" id="GO:0003677">
    <property type="term" value="F:DNA binding"/>
    <property type="evidence" value="ECO:0000318"/>
    <property type="project" value="GO_Central"/>
</dbReference>
<dbReference type="GO" id="GO:0004520">
    <property type="term" value="F:DNA endonuclease activity"/>
    <property type="evidence" value="ECO:0000304"/>
    <property type="project" value="ProtInc"/>
</dbReference>
<dbReference type="GO" id="GO:0019104">
    <property type="term" value="F:DNA N-glycosylase activity"/>
    <property type="evidence" value="ECO:0000304"/>
    <property type="project" value="Reactome"/>
</dbReference>
<dbReference type="GO" id="GO:0008263">
    <property type="term" value="F:pyrimidine-specific mismatch base pair DNA N-glycosylase activity"/>
    <property type="evidence" value="ECO:0000314"/>
    <property type="project" value="MGI"/>
</dbReference>
<dbReference type="GO" id="GO:0003696">
    <property type="term" value="F:satellite DNA binding"/>
    <property type="evidence" value="ECO:0000304"/>
    <property type="project" value="ProtInc"/>
</dbReference>
<dbReference type="GO" id="GO:0045008">
    <property type="term" value="P:depyrimidination"/>
    <property type="evidence" value="ECO:0000304"/>
    <property type="project" value="Reactome"/>
</dbReference>
<dbReference type="GO" id="GO:0006281">
    <property type="term" value="P:DNA repair"/>
    <property type="evidence" value="ECO:0000304"/>
    <property type="project" value="ProtInc"/>
</dbReference>
<dbReference type="GO" id="GO:0032355">
    <property type="term" value="P:response to estradiol"/>
    <property type="evidence" value="ECO:0007669"/>
    <property type="project" value="Ensembl"/>
</dbReference>
<dbReference type="CDD" id="cd01396">
    <property type="entry name" value="MeCP2_MBD"/>
    <property type="match status" value="1"/>
</dbReference>
<dbReference type="FunFam" id="1.10.340.30:FF:000051">
    <property type="entry name" value="Methyl-CpG-binding domain protein 4"/>
    <property type="match status" value="1"/>
</dbReference>
<dbReference type="FunFam" id="3.30.890.10:FF:000006">
    <property type="entry name" value="Methyl-CpG-binding domain protein 4"/>
    <property type="match status" value="1"/>
</dbReference>
<dbReference type="Gene3D" id="1.10.340.30">
    <property type="entry name" value="Hypothetical protein, domain 2"/>
    <property type="match status" value="1"/>
</dbReference>
<dbReference type="Gene3D" id="3.30.890.10">
    <property type="entry name" value="Methyl-cpg-binding Protein 2, Chain A"/>
    <property type="match status" value="1"/>
</dbReference>
<dbReference type="IDEAL" id="IID00696"/>
<dbReference type="InterPro" id="IPR016177">
    <property type="entry name" value="DNA-bd_dom_sf"/>
</dbReference>
<dbReference type="InterPro" id="IPR011257">
    <property type="entry name" value="DNA_glycosylase"/>
</dbReference>
<dbReference type="InterPro" id="IPR017352">
    <property type="entry name" value="MBD4"/>
</dbReference>
<dbReference type="InterPro" id="IPR045138">
    <property type="entry name" value="MeCP2/MBD4"/>
</dbReference>
<dbReference type="InterPro" id="IPR001739">
    <property type="entry name" value="Methyl_CpG_DNA-bd"/>
</dbReference>
<dbReference type="PANTHER" id="PTHR15074:SF7">
    <property type="entry name" value="METHYL-CPG-BINDING DOMAIN PROTEIN 4"/>
    <property type="match status" value="1"/>
</dbReference>
<dbReference type="PANTHER" id="PTHR15074">
    <property type="entry name" value="METHYL-CPG-BINDING PROTEIN"/>
    <property type="match status" value="1"/>
</dbReference>
<dbReference type="Pfam" id="PF01429">
    <property type="entry name" value="MBD"/>
    <property type="match status" value="1"/>
</dbReference>
<dbReference type="PIRSF" id="PIRSF038005">
    <property type="entry name" value="Methyl_CpG_bd_MBD4"/>
    <property type="match status" value="1"/>
</dbReference>
<dbReference type="SMART" id="SM00391">
    <property type="entry name" value="MBD"/>
    <property type="match status" value="1"/>
</dbReference>
<dbReference type="SUPFAM" id="SSF54171">
    <property type="entry name" value="DNA-binding domain"/>
    <property type="match status" value="1"/>
</dbReference>
<dbReference type="SUPFAM" id="SSF48150">
    <property type="entry name" value="DNA-glycosylase"/>
    <property type="match status" value="1"/>
</dbReference>
<dbReference type="PROSITE" id="PS50982">
    <property type="entry name" value="MBD"/>
    <property type="match status" value="1"/>
</dbReference>
<comment type="function">
    <text evidence="4 5">Mismatch-specific DNA N-glycosylase involved in DNA repair. Has thymine glycosylase activity and is specific for G:T mismatches within methylated and unmethylated CpG sites. Can also remove uracil or 5-fluorouracil in G:U mismatches. Has no lyase activity. Was first identified as methyl-CpG-binding protein.</text>
</comment>
<comment type="subunit">
    <text evidence="4 6">Interacts with MLH1.</text>
</comment>
<comment type="interaction">
    <interactant intactId="EBI-348011">
        <id>O95243</id>
    </interactant>
    <interactant intactId="EBI-494804">
        <id>Q13158</id>
        <label>FADD</label>
    </interactant>
    <organismsDiffer>false</organismsDiffer>
    <experiments>6</experiments>
</comment>
<comment type="interaction">
    <interactant intactId="EBI-6448717">
        <id>O95243-2</id>
    </interactant>
    <interactant intactId="EBI-747754">
        <id>P28799</id>
        <label>GRN</label>
    </interactant>
    <organismsDiffer>false</organismsDiffer>
    <experiments>3</experiments>
</comment>
<comment type="interaction">
    <interactant intactId="EBI-6448717">
        <id>O95243-2</id>
    </interactant>
    <interactant intactId="EBI-466029">
        <id>P42858</id>
        <label>HTT</label>
    </interactant>
    <organismsDiffer>false</organismsDiffer>
    <experiments>19</experiments>
</comment>
<comment type="interaction">
    <interactant intactId="EBI-6448717">
        <id>O95243-2</id>
    </interactant>
    <interactant intactId="EBI-744248">
        <id>P40692</id>
        <label>MLH1</label>
    </interactant>
    <organismsDiffer>false</organismsDiffer>
    <experiments>3</experiments>
</comment>
<comment type="interaction">
    <interactant intactId="EBI-6448717">
        <id>O95243-2</id>
    </interactant>
    <interactant intactId="EBI-9057228">
        <id>P11245</id>
        <label>NAT2</label>
    </interactant>
    <organismsDiffer>false</organismsDiffer>
    <experiments>3</experiments>
</comment>
<comment type="interaction">
    <interactant intactId="EBI-6448717">
        <id>O95243-2</id>
    </interactant>
    <interactant intactId="EBI-720609">
        <id>O76024</id>
        <label>WFS1</label>
    </interactant>
    <organismsDiffer>false</organismsDiffer>
    <experiments>3</experiments>
</comment>
<comment type="subcellular location">
    <subcellularLocation>
        <location>Nucleus</location>
    </subcellularLocation>
</comment>
<comment type="alternative products">
    <event type="alternative splicing"/>
    <isoform>
        <id>O95243-1</id>
        <name>1</name>
        <sequence type="displayed"/>
    </isoform>
    <isoform>
        <id>O95243-2</id>
        <name>2</name>
        <sequence type="described" ref="VSP_010816"/>
    </isoform>
    <isoform>
        <id>O95243-3</id>
        <name>3</name>
        <sequence type="described" ref="VSP_010817 VSP_010818"/>
    </isoform>
    <isoform>
        <id>O95243-5</id>
        <name>5</name>
        <sequence type="described" ref="VSP_054846"/>
    </isoform>
    <isoform>
        <id>O95243-6</id>
        <name>4</name>
        <sequence type="described" ref="VSP_054845"/>
    </isoform>
</comment>
<comment type="disease" evidence="7 9 11">
    <disease id="DI-06473">
        <name>Tumor predisposition syndrome 2</name>
        <acronym>TPDS2</acronym>
        <description>An autosomal recessive condition characterized by predisposition to develop a variety of tumors or malignancies, including acute myeloid leukemia, myelodysplastic syndrome, colorectal adenomatous polyposis and carcinoma, and uveal melanoma.</description>
        <dbReference type="MIM" id="619975"/>
    </disease>
    <text>The disease is caused by variants affecting the gene represented in this entry.</text>
</comment>
<comment type="disease" evidence="8 10">
    <disease id="DI-06493">
        <name>Melanoma, uveal, 1</name>
        <acronym>UVM1</acronym>
        <description>Most common intraocular malignancy, arising from melanocytes in the iris, ciliary body, or choroid. Metastases develop in more than 30% of case patients, almost invariably in the liver, with poor prognosis.</description>
        <dbReference type="MIM" id="606660"/>
    </disease>
    <text>Disease susceptibility is associated with variants affecting the gene represented in this entry.</text>
</comment>
<comment type="miscellaneous">
    <molecule>Isoform 4</molecule>
    <text evidence="18">Possesses uracil DNA glycosylase but not thymine DNA glycosylase activity.</text>
</comment>
<comment type="online information" name="Atlas of Genetics and Cytogenetics in Oncology and Haematology">
    <link uri="https://atlasgeneticsoncology.org/gene/41312/MBD4"/>
</comment>
<keyword id="KW-0002">3D-structure</keyword>
<keyword id="KW-0025">Alternative splicing</keyword>
<keyword id="KW-0225">Disease variant</keyword>
<keyword id="KW-0227">DNA damage</keyword>
<keyword id="KW-0234">DNA repair</keyword>
<keyword id="KW-0238">DNA-binding</keyword>
<keyword id="KW-0378">Hydrolase</keyword>
<keyword id="KW-0539">Nucleus</keyword>
<keyword id="KW-0597">Phosphoprotein</keyword>
<keyword id="KW-1267">Proteomics identification</keyword>
<keyword id="KW-1185">Reference proteome</keyword>
<evidence type="ECO:0000250" key="1"/>
<evidence type="ECO:0000255" key="2">
    <source>
        <dbReference type="PROSITE-ProRule" id="PRU00338"/>
    </source>
</evidence>
<evidence type="ECO:0000256" key="3">
    <source>
        <dbReference type="SAM" id="MobiDB-lite"/>
    </source>
</evidence>
<evidence type="ECO:0000269" key="4">
    <source>
    </source>
</evidence>
<evidence type="ECO:0000269" key="5">
    <source>
    </source>
</evidence>
<evidence type="ECO:0000269" key="6">
    <source>
    </source>
</evidence>
<evidence type="ECO:0000269" key="7">
    <source>
    </source>
</evidence>
<evidence type="ECO:0000269" key="8">
    <source>
    </source>
</evidence>
<evidence type="ECO:0000269" key="9">
    <source>
    </source>
</evidence>
<evidence type="ECO:0000269" key="10">
    <source>
    </source>
</evidence>
<evidence type="ECO:0000269" key="11">
    <source>
    </source>
</evidence>
<evidence type="ECO:0000269" key="12">
    <source ref="8"/>
</evidence>
<evidence type="ECO:0000303" key="13">
    <source>
    </source>
</evidence>
<evidence type="ECO:0000303" key="14">
    <source>
    </source>
</evidence>
<evidence type="ECO:0000303" key="15">
    <source>
    </source>
</evidence>
<evidence type="ECO:0000303" key="16">
    <source ref="5"/>
</evidence>
<evidence type="ECO:0000303" key="17">
    <source ref="7"/>
</evidence>
<evidence type="ECO:0000305" key="18"/>
<evidence type="ECO:0000305" key="19">
    <source>
    </source>
</evidence>
<evidence type="ECO:0000312" key="20">
    <source>
        <dbReference type="HGNC" id="HGNC:6919"/>
    </source>
</evidence>
<evidence type="ECO:0007744" key="21">
    <source>
    </source>
</evidence>
<evidence type="ECO:0007829" key="22">
    <source>
        <dbReference type="PDB" id="4LG7"/>
    </source>
</evidence>
<evidence type="ECO:0007829" key="23">
    <source>
        <dbReference type="PDB" id="4OFA"/>
    </source>
</evidence>
<gene>
    <name evidence="20" type="primary">MBD4</name>
    <name evidence="19" type="synonym">MED1</name>
</gene>
<reference key="1">
    <citation type="journal article" date="1998" name="Mol. Cell. Biol.">
        <title>Identification and characterization of a family of mammalian methyl-CpG binding proteins.</title>
        <authorList>
            <person name="Hendrich B."/>
            <person name="Bird A."/>
        </authorList>
    </citation>
    <scope>NUCLEOTIDE SEQUENCE [MRNA] (ISOFORM 1)</scope>
</reference>
<reference key="2">
    <citation type="journal article" date="1999" name="Mamm. Genome">
        <title>Genomic structure and chromosomal mapping of the murine and human mbd1, mbd2, mbd3, and mbd4 genes.</title>
        <authorList>
            <person name="Hendrich B."/>
            <person name="Abbott C."/>
            <person name="McQueen H."/>
            <person name="Chambers D."/>
            <person name="Cross S.H."/>
            <person name="Bird A."/>
        </authorList>
    </citation>
    <scope>NUCLEOTIDE SEQUENCE [GENOMIC DNA]</scope>
</reference>
<reference key="3">
    <citation type="journal article" date="1999" name="Proc. Natl. Acad. Sci. U.S.A.">
        <title>MED1, a novel human methyl-CpG-binding endonuclease, interacts with DNA mismatch repair protein MLH1.</title>
        <authorList>
            <person name="Bellacosa A."/>
            <person name="Cicchillitti L."/>
            <person name="Schepis F."/>
            <person name="Riccio A."/>
            <person name="Yeung A.T."/>
            <person name="Matsumoto Y."/>
            <person name="Golemis E.A."/>
            <person name="Genuardi M."/>
            <person name="Neri G."/>
        </authorList>
    </citation>
    <scope>NUCLEOTIDE SEQUENCE [MRNA] (ISOFORM 1)</scope>
    <scope>FUNCTION</scope>
    <scope>INTERACTION WITH MLH1</scope>
    <source>
        <tissue>Fetal brain</tissue>
    </source>
</reference>
<reference key="4">
    <citation type="journal article" date="2007" name="Oncol. Rep.">
        <title>The identification of a novel alternatively spliced form of the MBD4 DNA glycosylase.</title>
        <authorList>
            <person name="Owen R.M."/>
            <person name="Baker R.D."/>
            <person name="Bader S."/>
            <person name="Dunlop M.G."/>
            <person name="Nicholl I.D."/>
        </authorList>
    </citation>
    <scope>NUCLEOTIDE SEQUENCE [MRNA] (ISOFORM 4)</scope>
    <scope>ALTERNATIVE SPLICING</scope>
</reference>
<reference key="5">
    <citation type="submission" date="2002-07" db="EMBL/GenBank/DDBJ databases">
        <authorList>
            <person name="Guo J.H."/>
            <person name="Chen L."/>
            <person name="Yu L."/>
        </authorList>
    </citation>
    <scope>NUCLEOTIDE SEQUENCE [LARGE SCALE MRNA] (ISOFORM 3)</scope>
    <source>
        <tissue>Lung</tissue>
    </source>
</reference>
<reference key="6">
    <citation type="journal article" date="2004" name="Nat. Genet.">
        <title>Complete sequencing and characterization of 21,243 full-length human cDNAs.</title>
        <authorList>
            <person name="Ota T."/>
            <person name="Suzuki Y."/>
            <person name="Nishikawa T."/>
            <person name="Otsuki T."/>
            <person name="Sugiyama T."/>
            <person name="Irie R."/>
            <person name="Wakamatsu A."/>
            <person name="Hayashi K."/>
            <person name="Sato H."/>
            <person name="Nagai K."/>
            <person name="Kimura K."/>
            <person name="Makita H."/>
            <person name="Sekine M."/>
            <person name="Obayashi M."/>
            <person name="Nishi T."/>
            <person name="Shibahara T."/>
            <person name="Tanaka T."/>
            <person name="Ishii S."/>
            <person name="Yamamoto J."/>
            <person name="Saito K."/>
            <person name="Kawai Y."/>
            <person name="Isono Y."/>
            <person name="Nakamura Y."/>
            <person name="Nagahari K."/>
            <person name="Murakami K."/>
            <person name="Yasuda T."/>
            <person name="Iwayanagi T."/>
            <person name="Wagatsuma M."/>
            <person name="Shiratori A."/>
            <person name="Sudo H."/>
            <person name="Hosoiri T."/>
            <person name="Kaku Y."/>
            <person name="Kodaira H."/>
            <person name="Kondo H."/>
            <person name="Sugawara M."/>
            <person name="Takahashi M."/>
            <person name="Kanda K."/>
            <person name="Yokoi T."/>
            <person name="Furuya T."/>
            <person name="Kikkawa E."/>
            <person name="Omura Y."/>
            <person name="Abe K."/>
            <person name="Kamihara K."/>
            <person name="Katsuta N."/>
            <person name="Sato K."/>
            <person name="Tanikawa M."/>
            <person name="Yamazaki M."/>
            <person name="Ninomiya K."/>
            <person name="Ishibashi T."/>
            <person name="Yamashita H."/>
            <person name="Murakawa K."/>
            <person name="Fujimori K."/>
            <person name="Tanai H."/>
            <person name="Kimata M."/>
            <person name="Watanabe M."/>
            <person name="Hiraoka S."/>
            <person name="Chiba Y."/>
            <person name="Ishida S."/>
            <person name="Ono Y."/>
            <person name="Takiguchi S."/>
            <person name="Watanabe S."/>
            <person name="Yosida M."/>
            <person name="Hotuta T."/>
            <person name="Kusano J."/>
            <person name="Kanehori K."/>
            <person name="Takahashi-Fujii A."/>
            <person name="Hara H."/>
            <person name="Tanase T.-O."/>
            <person name="Nomura Y."/>
            <person name="Togiya S."/>
            <person name="Komai F."/>
            <person name="Hara R."/>
            <person name="Takeuchi K."/>
            <person name="Arita M."/>
            <person name="Imose N."/>
            <person name="Musashino K."/>
            <person name="Yuuki H."/>
            <person name="Oshima A."/>
            <person name="Sasaki N."/>
            <person name="Aotsuka S."/>
            <person name="Yoshikawa Y."/>
            <person name="Matsunawa H."/>
            <person name="Ichihara T."/>
            <person name="Shiohata N."/>
            <person name="Sano S."/>
            <person name="Moriya S."/>
            <person name="Momiyama H."/>
            <person name="Satoh N."/>
            <person name="Takami S."/>
            <person name="Terashima Y."/>
            <person name="Suzuki O."/>
            <person name="Nakagawa S."/>
            <person name="Senoh A."/>
            <person name="Mizoguchi H."/>
            <person name="Goto Y."/>
            <person name="Shimizu F."/>
            <person name="Wakebe H."/>
            <person name="Hishigaki H."/>
            <person name="Watanabe T."/>
            <person name="Sugiyama A."/>
            <person name="Takemoto M."/>
            <person name="Kawakami B."/>
            <person name="Yamazaki M."/>
            <person name="Watanabe K."/>
            <person name="Kumagai A."/>
            <person name="Itakura S."/>
            <person name="Fukuzumi Y."/>
            <person name="Fujimori Y."/>
            <person name="Komiyama M."/>
            <person name="Tashiro H."/>
            <person name="Tanigami A."/>
            <person name="Fujiwara T."/>
            <person name="Ono T."/>
            <person name="Yamada K."/>
            <person name="Fujii Y."/>
            <person name="Ozaki K."/>
            <person name="Hirao M."/>
            <person name="Ohmori Y."/>
            <person name="Kawabata A."/>
            <person name="Hikiji T."/>
            <person name="Kobatake N."/>
            <person name="Inagaki H."/>
            <person name="Ikema Y."/>
            <person name="Okamoto S."/>
            <person name="Okitani R."/>
            <person name="Kawakami T."/>
            <person name="Noguchi S."/>
            <person name="Itoh T."/>
            <person name="Shigeta K."/>
            <person name="Senba T."/>
            <person name="Matsumura K."/>
            <person name="Nakajima Y."/>
            <person name="Mizuno T."/>
            <person name="Morinaga M."/>
            <person name="Sasaki M."/>
            <person name="Togashi T."/>
            <person name="Oyama M."/>
            <person name="Hata H."/>
            <person name="Watanabe M."/>
            <person name="Komatsu T."/>
            <person name="Mizushima-Sugano J."/>
            <person name="Satoh T."/>
            <person name="Shirai Y."/>
            <person name="Takahashi Y."/>
            <person name="Nakagawa K."/>
            <person name="Okumura K."/>
            <person name="Nagase T."/>
            <person name="Nomura N."/>
            <person name="Kikuchi H."/>
            <person name="Masuho Y."/>
            <person name="Yamashita R."/>
            <person name="Nakai K."/>
            <person name="Yada T."/>
            <person name="Nakamura Y."/>
            <person name="Ohara O."/>
            <person name="Isogai T."/>
            <person name="Sugano S."/>
        </authorList>
    </citation>
    <scope>NUCLEOTIDE SEQUENCE [LARGE SCALE MRNA] (ISOFORM 5)</scope>
    <source>
        <tissue>Testis</tissue>
    </source>
</reference>
<reference key="7">
    <citation type="submission" date="2004-05" db="EMBL/GenBank/DDBJ databases">
        <title>Cloning of human full open reading frames in Gateway(TM) system entry vector (pDONR201).</title>
        <authorList>
            <person name="Ebert L."/>
            <person name="Schick M."/>
            <person name="Neubert P."/>
            <person name="Schatten R."/>
            <person name="Henze S."/>
            <person name="Korn B."/>
        </authorList>
    </citation>
    <scope>NUCLEOTIDE SEQUENCE [LARGE SCALE MRNA] (ISOFORM 2)</scope>
</reference>
<reference key="8">
    <citation type="submission" date="2002-03" db="EMBL/GenBank/DDBJ databases">
        <authorList>
            <consortium name="NIEHS SNPs program"/>
        </authorList>
    </citation>
    <scope>NUCLEOTIDE SEQUENCE [GENOMIC DNA]</scope>
    <scope>VARIANTS SER-273; PRO-342; LYS-346 AND HIS-568</scope>
</reference>
<reference key="9">
    <citation type="journal article" date="2006" name="Nature">
        <title>The DNA sequence, annotation and analysis of human chromosome 3.</title>
        <authorList>
            <person name="Muzny D.M."/>
            <person name="Scherer S.E."/>
            <person name="Kaul R."/>
            <person name="Wang J."/>
            <person name="Yu J."/>
            <person name="Sudbrak R."/>
            <person name="Buhay C.J."/>
            <person name="Chen R."/>
            <person name="Cree A."/>
            <person name="Ding Y."/>
            <person name="Dugan-Rocha S."/>
            <person name="Gill R."/>
            <person name="Gunaratne P."/>
            <person name="Harris R.A."/>
            <person name="Hawes A.C."/>
            <person name="Hernandez J."/>
            <person name="Hodgson A.V."/>
            <person name="Hume J."/>
            <person name="Jackson A."/>
            <person name="Khan Z.M."/>
            <person name="Kovar-Smith C."/>
            <person name="Lewis L.R."/>
            <person name="Lozado R.J."/>
            <person name="Metzker M.L."/>
            <person name="Milosavljevic A."/>
            <person name="Miner G.R."/>
            <person name="Morgan M.B."/>
            <person name="Nazareth L.V."/>
            <person name="Scott G."/>
            <person name="Sodergren E."/>
            <person name="Song X.-Z."/>
            <person name="Steffen D."/>
            <person name="Wei S."/>
            <person name="Wheeler D.A."/>
            <person name="Wright M.W."/>
            <person name="Worley K.C."/>
            <person name="Yuan Y."/>
            <person name="Zhang Z."/>
            <person name="Adams C.Q."/>
            <person name="Ansari-Lari M.A."/>
            <person name="Ayele M."/>
            <person name="Brown M.J."/>
            <person name="Chen G."/>
            <person name="Chen Z."/>
            <person name="Clendenning J."/>
            <person name="Clerc-Blankenburg K.P."/>
            <person name="Chen R."/>
            <person name="Chen Z."/>
            <person name="Davis C."/>
            <person name="Delgado O."/>
            <person name="Dinh H.H."/>
            <person name="Dong W."/>
            <person name="Draper H."/>
            <person name="Ernst S."/>
            <person name="Fu G."/>
            <person name="Gonzalez-Garay M.L."/>
            <person name="Garcia D.K."/>
            <person name="Gillett W."/>
            <person name="Gu J."/>
            <person name="Hao B."/>
            <person name="Haugen E."/>
            <person name="Havlak P."/>
            <person name="He X."/>
            <person name="Hennig S."/>
            <person name="Hu S."/>
            <person name="Huang W."/>
            <person name="Jackson L.R."/>
            <person name="Jacob L.S."/>
            <person name="Kelly S.H."/>
            <person name="Kube M."/>
            <person name="Levy R."/>
            <person name="Li Z."/>
            <person name="Liu B."/>
            <person name="Liu J."/>
            <person name="Liu W."/>
            <person name="Lu J."/>
            <person name="Maheshwari M."/>
            <person name="Nguyen B.-V."/>
            <person name="Okwuonu G.O."/>
            <person name="Palmeiri A."/>
            <person name="Pasternak S."/>
            <person name="Perez L.M."/>
            <person name="Phelps K.A."/>
            <person name="Plopper F.J."/>
            <person name="Qiang B."/>
            <person name="Raymond C."/>
            <person name="Rodriguez R."/>
            <person name="Saenphimmachak C."/>
            <person name="Santibanez J."/>
            <person name="Shen H."/>
            <person name="Shen Y."/>
            <person name="Subramanian S."/>
            <person name="Tabor P.E."/>
            <person name="Verduzco D."/>
            <person name="Waldron L."/>
            <person name="Wang J."/>
            <person name="Wang J."/>
            <person name="Wang Q."/>
            <person name="Williams G.A."/>
            <person name="Wong G.K.-S."/>
            <person name="Yao Z."/>
            <person name="Zhang J."/>
            <person name="Zhang X."/>
            <person name="Zhao G."/>
            <person name="Zhou J."/>
            <person name="Zhou Y."/>
            <person name="Nelson D."/>
            <person name="Lehrach H."/>
            <person name="Reinhardt R."/>
            <person name="Naylor S.L."/>
            <person name="Yang H."/>
            <person name="Olson M."/>
            <person name="Weinstock G."/>
            <person name="Gibbs R.A."/>
        </authorList>
    </citation>
    <scope>NUCLEOTIDE SEQUENCE [LARGE SCALE GENOMIC DNA]</scope>
</reference>
<reference key="10">
    <citation type="submission" date="2005-09" db="EMBL/GenBank/DDBJ databases">
        <authorList>
            <person name="Mural R.J."/>
            <person name="Istrail S."/>
            <person name="Sutton G.G."/>
            <person name="Florea L."/>
            <person name="Halpern A.L."/>
            <person name="Mobarry C.M."/>
            <person name="Lippert R."/>
            <person name="Walenz B."/>
            <person name="Shatkay H."/>
            <person name="Dew I."/>
            <person name="Miller J.R."/>
            <person name="Flanigan M.J."/>
            <person name="Edwards N.J."/>
            <person name="Bolanos R."/>
            <person name="Fasulo D."/>
            <person name="Halldorsson B.V."/>
            <person name="Hannenhalli S."/>
            <person name="Turner R."/>
            <person name="Yooseph S."/>
            <person name="Lu F."/>
            <person name="Nusskern D.R."/>
            <person name="Shue B.C."/>
            <person name="Zheng X.H."/>
            <person name="Zhong F."/>
            <person name="Delcher A.L."/>
            <person name="Huson D.H."/>
            <person name="Kravitz S.A."/>
            <person name="Mouchard L."/>
            <person name="Reinert K."/>
            <person name="Remington K.A."/>
            <person name="Clark A.G."/>
            <person name="Waterman M.S."/>
            <person name="Eichler E.E."/>
            <person name="Adams M.D."/>
            <person name="Hunkapiller M.W."/>
            <person name="Myers E.W."/>
            <person name="Venter J.C."/>
        </authorList>
    </citation>
    <scope>NUCLEOTIDE SEQUENCE [LARGE SCALE GENOMIC DNA]</scope>
</reference>
<reference key="11">
    <citation type="journal article" date="2004" name="Genome Res.">
        <title>The status, quality, and expansion of the NIH full-length cDNA project: the Mammalian Gene Collection (MGC).</title>
        <authorList>
            <consortium name="The MGC Project Team"/>
        </authorList>
    </citation>
    <scope>NUCLEOTIDE SEQUENCE [LARGE SCALE MRNA] (ISOFORM 2)</scope>
    <source>
        <tissue>Lung</tissue>
    </source>
</reference>
<reference key="12">
    <citation type="journal article" date="2000" name="J. Biol. Chem.">
        <title>Biphasic kinetics of the human DNA repair protein MED1 (MBD4), a mismatch-specific DNA N-glycosylase.</title>
        <authorList>
            <person name="Petronzelli F."/>
            <person name="Riccio A."/>
            <person name="Markham G.D."/>
            <person name="Seeholzer S.H."/>
            <person name="Stoerker J."/>
            <person name="Genuardi M."/>
            <person name="Yeung A.T."/>
            <person name="Matsumoto Y."/>
            <person name="Bellacosa A."/>
        </authorList>
    </citation>
    <scope>FUNCTION</scope>
</reference>
<reference key="13">
    <citation type="journal article" date="2003" name="Proc. Natl. Acad. Sci. U.S.A.">
        <title>Fas-associated death domain protein interacts with methyl-CpG binding domain protein 4: a potential link between genome surveillance and apoptosis.</title>
        <authorList>
            <person name="Screaton R.A."/>
            <person name="Kiessling S."/>
            <person name="Sansom O.J."/>
            <person name="Millar C.B."/>
            <person name="Maddison K."/>
            <person name="Bird A."/>
            <person name="Clarke A.R."/>
            <person name="Frisch S.M."/>
        </authorList>
    </citation>
    <scope>INTERACTION WITH FADD</scope>
</reference>
<reference key="14">
    <citation type="journal article" date="2008" name="Proc. Natl. Acad. Sci. U.S.A.">
        <title>A quantitative atlas of mitotic phosphorylation.</title>
        <authorList>
            <person name="Dephoure N."/>
            <person name="Zhou C."/>
            <person name="Villen J."/>
            <person name="Beausoleil S.A."/>
            <person name="Bakalarski C.E."/>
            <person name="Elledge S.J."/>
            <person name="Gygi S.P."/>
        </authorList>
    </citation>
    <scope>IDENTIFICATION BY MASS SPECTROMETRY [LARGE SCALE ANALYSIS]</scope>
    <source>
        <tissue>Cervix carcinoma</tissue>
    </source>
</reference>
<reference key="15">
    <citation type="journal article" date="2013" name="J. Proteome Res.">
        <title>Toward a comprehensive characterization of a human cancer cell phosphoproteome.</title>
        <authorList>
            <person name="Zhou H."/>
            <person name="Di Palma S."/>
            <person name="Preisinger C."/>
            <person name="Peng M."/>
            <person name="Polat A.N."/>
            <person name="Heck A.J."/>
            <person name="Mohammed S."/>
        </authorList>
    </citation>
    <scope>PHOSPHORYLATION [LARGE SCALE ANALYSIS] AT SER-318 AND SER-428</scope>
    <scope>IDENTIFICATION BY MASS SPECTROMETRY [LARGE SCALE ANALYSIS]</scope>
    <source>
        <tissue>Cervix carcinoma</tissue>
        <tissue>Erythroleukemia</tissue>
    </source>
</reference>
<reference key="16">
    <citation type="journal article" date="2018" name="Blood">
        <title>MBD4 guards against methylation damage and germ line deficiency predisposes to clonal hematopoiesis and early-onset AML.</title>
        <authorList>
            <person name="Sanders M.A."/>
            <person name="Chew E."/>
            <person name="Flensburg C."/>
            <person name="Zeilemaker A."/>
            <person name="Miller S.E."/>
            <person name="Al Hinai A.S."/>
            <person name="Bajel A."/>
            <person name="Luiken B."/>
            <person name="Rijken M."/>
            <person name="Mclennan T."/>
            <person name="Hoogenboezem R.M."/>
            <person name="Kavelaars F.G."/>
            <person name="Froehling S."/>
            <person name="Blewitt M.E."/>
            <person name="Bindels E.M."/>
            <person name="Alexander W.S."/>
            <person name="Loewenberg B."/>
            <person name="Roberts A.W."/>
            <person name="Valk P.J.M."/>
            <person name="Majewski I.J."/>
        </authorList>
    </citation>
    <scope>VARIANTS TPDS2 255-SER--SER-580 DEL; 431-ARG--SER-580 DEL; 546-ARG--SER-580 DEL; 563-LEU--SER-580 DEL AND HIS-567 DEL</scope>
    <scope>INVOLVEMENT IN TPDS2</scope>
    <scope>CHARACTERIZATION OF VARIANT TPDS2 HIS-567 DEL</scope>
    <scope>MUTAGENESIS OF ASP-560</scope>
</reference>
<reference key="17">
    <citation type="journal article" date="2019" name="Immunogenetics">
        <title>Prolonged stable disease in a uveal melanoma patient with germline MBD4 nonsense mutation treated with pembrolizumab and ipilimumab.</title>
        <authorList>
            <person name="Johansson P.A."/>
            <person name="Stark A."/>
            <person name="Palmer J.M."/>
            <person name="Bigby K."/>
            <person name="Brooks K."/>
            <person name="Rolfe O."/>
            <person name="Pritchard A.L."/>
            <person name="Whitehead K."/>
            <person name="Warrier S."/>
            <person name="Glasson W."/>
            <person name="Hayward N.K."/>
        </authorList>
    </citation>
    <scope>VARIANT UVM1 563-LEU--SER-580 DEL</scope>
    <scope>INVOLVEMENT IN UVM1</scope>
</reference>
<reference key="18">
    <citation type="journal article" date="2019" name="Immunogenetics">
        <authorList>
            <person name="Johansson P.A."/>
            <person name="Stark A."/>
            <person name="Palmer J.M."/>
            <person name="Bigby K."/>
            <person name="Brooks K."/>
            <person name="Rolfe O."/>
            <person name="Pritchard A.L."/>
            <person name="Whitehead K."/>
            <person name="Warrier S."/>
            <person name="Glasson W."/>
            <person name="Hayward N.K."/>
        </authorList>
    </citation>
    <scope>ERRATUM OF PUBMED:30714079</scope>
</reference>
<reference key="19">
    <citation type="journal article" date="2019" name="Oncol. Rep.">
        <title>A germline MBD4 mutation was identified in a patient with colorectal oligopolyposis and early-onset cancer: A case report.</title>
        <authorList>
            <person name="Tanakaya K."/>
            <person name="Kumamoto K."/>
            <person name="Tada Y."/>
            <person name="Eguchi H."/>
            <person name="Ishibashi K."/>
            <person name="Idani H."/>
            <person name="Tachikawa T."/>
            <person name="Akagi K."/>
            <person name="Okazaki Y."/>
            <person name="Ishida H."/>
        </authorList>
    </citation>
    <scope>VARIANT TPDS2 73-GLN--SER-580 DEL</scope>
    <scope>CHARACTERIZATION OF VARIANT TPDS2 73-GLN--SER-580 DEL</scope>
</reference>
<reference key="20">
    <citation type="journal article" date="2021" name="J. Natl. Cancer Inst.">
        <title>Germline MBD4 Mutations and Predisposition to Uveal Melanoma.</title>
        <authorList>
            <person name="Derrien A.C."/>
            <person name="Rodrigues M."/>
            <person name="Eeckhoutte A."/>
            <person name="Dayot S."/>
            <person name="Houy A."/>
            <person name="Mobuchon L."/>
            <person name="Gardrat S."/>
            <person name="Lequin D."/>
            <person name="Ballet S."/>
            <person name="Pierron G."/>
            <person name="Alsafadi S."/>
            <person name="Mariani O."/>
            <person name="El-Marjou A."/>
            <person name="Matet A."/>
            <person name="Colas C."/>
            <person name="Cassoux N."/>
            <person name="Stern M.H."/>
        </authorList>
    </citation>
    <scope>VARIANTS UVM1 181-ARG--SER-580 DEL; TRP-468 AND 569-TRP--SER-580 DEL</scope>
    <scope>INVOLVEMENT IN UVM1</scope>
    <scope>CHARACTERIZATION OF VARIANTS UVM1 TRP-468 AND 569-TRP--SER-580 DEL</scope>
</reference>
<reference key="21">
    <citation type="journal article" date="2022" name="Am. J. Hum. Genet.">
        <title>Germline MBD4 deficiency causes a multi-tumor predisposition syndrome.</title>
        <authorList>
            <consortium name="Genomics England Research Consortium"/>
            <consortium name="CORGI Consortium"/>
            <consortium name="WGS500 Consortium"/>
            <person name="Palles C."/>
            <person name="West H.D."/>
            <person name="Chew E."/>
            <person name="Galavotti S."/>
            <person name="Flensburg C."/>
            <person name="Grolleman J.E."/>
            <person name="Jansen E.A.M."/>
            <person name="Curley H."/>
            <person name="Chegwidden L."/>
            <person name="Arbe-Barnes E.H."/>
            <person name="Lander N."/>
            <person name="Truscott R."/>
            <person name="Pagan J."/>
            <person name="Bajel A."/>
            <person name="Sherwood K."/>
            <person name="Martin L."/>
            <person name="Thomas H."/>
            <person name="Georgiou D."/>
            <person name="Fostira F."/>
            <person name="Goldberg Y."/>
            <person name="Adams D.J."/>
            <person name="van der Biezen S.A.M."/>
            <person name="Christie M."/>
            <person name="Clendenning M."/>
            <person name="Thomas L.E."/>
            <person name="Deltas C."/>
            <person name="Dimovski A.J."/>
            <person name="Dymerska D."/>
            <person name="Lubinski J."/>
            <person name="Mahmood K."/>
            <person name="van der Post R.S."/>
            <person name="Sanders M."/>
            <person name="Weitz J."/>
            <person name="Taylor J.C."/>
            <person name="Turnbull C."/>
            <person name="Vreede L."/>
            <person name="van Wezel T."/>
            <person name="Whalley C."/>
            <person name="Arnedo-Pac C."/>
            <person name="Caravagna G."/>
            <person name="Cross W."/>
            <person name="Chubb D."/>
            <person name="Frangou A."/>
            <person name="Gruber A.J."/>
            <person name="Kinnersley B."/>
            <person name="Noyvert B."/>
            <person name="Church D."/>
            <person name="Graham T."/>
            <person name="Houlston R."/>
            <person name="Lopez-Bigas N."/>
            <person name="Sottoriva A."/>
            <person name="Wedge D."/>
            <person name="Jenkins M.A."/>
            <person name="Kuiper R.P."/>
            <person name="Roberts A.W."/>
            <person name="Cheadle J.P."/>
            <person name="Ligtenberg M.J.L."/>
            <person name="Hoogerbrugge N."/>
            <person name="Koelzer V.H."/>
            <person name="Rivas A.D."/>
            <person name="Winship I.M."/>
            <person name="Ponte C.R."/>
            <person name="Buchanan D.D."/>
            <person name="Power D.G."/>
            <person name="Green A."/>
            <person name="Tomlinson I.P.M."/>
            <person name="Sampson J.R."/>
            <person name="Majewski I.J."/>
            <person name="de Voer R.M."/>
        </authorList>
    </citation>
    <scope>VARIANT TPDS2 563-LEU--SER-580 DEL</scope>
    <scope>INVOLVEMENT IN TPDS2</scope>
</reference>
<sequence length="580" mass="66051">MGTTGLESLSLGDRGAAPTVTSSERLVPDPPNDLRKEDVAMELERVGEDEEQMMIKRSSECNPLLQEPIASAQFGATAGTECRKSVPCGWERVVKQRLFGKTAGRFDVYFISPQGLKFRSKSSLANYLHKNGETSLKPEDFDFTVLSKRGIKSRYKDCSMAALTSHLQNQSNNSNWNLRTRSKCKKDVFMPPSSSSELQESRGLSNFTSTHLLLKEDEGVDDVNFRKVRKPKGKVTILKGIPIKKTKKGCRKSCSGFVQSDSKRESVCNKADAESEPVAQKSQLDRTVCISDAGACGETLSVTSEENSLVKKKERSLSSGSNFCSEQKTSGIINKFCSAKDSEHNEKYEDTFLESEEIGTKVEVVERKEHLHTDILKRGSEMDNNCSPTRKDFTGEKIFQEDTIPRTQIERRKTSLYFSSKYNKEALSPPRRKAFKKWTPPRSPFNLVQETLFHDPWKLLIATIFLNRTSGKMAIPVLWKFLEKYPSAEVARTADWRDVSELLKPLGLYDLRAKTIVKFSDEYLTKQWKYPIELHGIGKYGNDSYRIFCVNEWKQVHPEDHKLNKYHDWLWENHEKLSLS</sequence>